<name>PIMT_PSESM</name>
<sequence>MTSQRTRERLIQRLCEEGIANQRVLDVIRKTPRHLFVDEALAHRAYEDTALPIGHNQTISQPYMVARMSELLLAAGPLDKVMEIGTGSGYQTAVLSQLVERVFSVERIKGLQDRAKERLVELNLRNVVFRWGDGWEGWPALAPYNGIIVTAVATDVPQALLDQLAPGGRLVIPVGAGEVQQLMLIIREENGFSRHVLGAVRFVPLLNGPIA</sequence>
<gene>
    <name evidence="1" type="primary">pcm</name>
    <name type="ordered locus">PSPTO_1563</name>
</gene>
<protein>
    <recommendedName>
        <fullName evidence="1">Protein-L-isoaspartate O-methyltransferase</fullName>
        <ecNumber evidence="1">2.1.1.77</ecNumber>
    </recommendedName>
    <alternativeName>
        <fullName evidence="1">L-isoaspartyl protein carboxyl methyltransferase</fullName>
    </alternativeName>
    <alternativeName>
        <fullName evidence="1">Protein L-isoaspartyl methyltransferase</fullName>
    </alternativeName>
    <alternativeName>
        <fullName evidence="1">Protein-beta-aspartate methyltransferase</fullName>
        <shortName evidence="1">PIMT</shortName>
    </alternativeName>
</protein>
<proteinExistence type="inferred from homology"/>
<keyword id="KW-0963">Cytoplasm</keyword>
<keyword id="KW-0489">Methyltransferase</keyword>
<keyword id="KW-1185">Reference proteome</keyword>
<keyword id="KW-0949">S-adenosyl-L-methionine</keyword>
<keyword id="KW-0808">Transferase</keyword>
<dbReference type="EC" id="2.1.1.77" evidence="1"/>
<dbReference type="EMBL" id="AE016853">
    <property type="protein sequence ID" value="AAO55083.1"/>
    <property type="molecule type" value="Genomic_DNA"/>
</dbReference>
<dbReference type="RefSeq" id="NP_791388.1">
    <property type="nucleotide sequence ID" value="NC_004578.1"/>
</dbReference>
<dbReference type="RefSeq" id="WP_005766015.1">
    <property type="nucleotide sequence ID" value="NC_004578.1"/>
</dbReference>
<dbReference type="SMR" id="Q886L4"/>
<dbReference type="STRING" id="223283.PSPTO_1563"/>
<dbReference type="KEGG" id="pst:PSPTO_1563"/>
<dbReference type="PATRIC" id="fig|223283.9.peg.1589"/>
<dbReference type="eggNOG" id="COG2518">
    <property type="taxonomic scope" value="Bacteria"/>
</dbReference>
<dbReference type="HOGENOM" id="CLU_055432_2_0_6"/>
<dbReference type="OrthoDB" id="9810066at2"/>
<dbReference type="PhylomeDB" id="Q886L4"/>
<dbReference type="Proteomes" id="UP000002515">
    <property type="component" value="Chromosome"/>
</dbReference>
<dbReference type="GO" id="GO:0005737">
    <property type="term" value="C:cytoplasm"/>
    <property type="evidence" value="ECO:0007669"/>
    <property type="project" value="UniProtKB-SubCell"/>
</dbReference>
<dbReference type="GO" id="GO:0004719">
    <property type="term" value="F:protein-L-isoaspartate (D-aspartate) O-methyltransferase activity"/>
    <property type="evidence" value="ECO:0007669"/>
    <property type="project" value="UniProtKB-UniRule"/>
</dbReference>
<dbReference type="GO" id="GO:0032259">
    <property type="term" value="P:methylation"/>
    <property type="evidence" value="ECO:0007669"/>
    <property type="project" value="UniProtKB-KW"/>
</dbReference>
<dbReference type="GO" id="GO:0036211">
    <property type="term" value="P:protein modification process"/>
    <property type="evidence" value="ECO:0007669"/>
    <property type="project" value="UniProtKB-UniRule"/>
</dbReference>
<dbReference type="GO" id="GO:0030091">
    <property type="term" value="P:protein repair"/>
    <property type="evidence" value="ECO:0007669"/>
    <property type="project" value="UniProtKB-UniRule"/>
</dbReference>
<dbReference type="CDD" id="cd02440">
    <property type="entry name" value="AdoMet_MTases"/>
    <property type="match status" value="1"/>
</dbReference>
<dbReference type="FunFam" id="3.40.50.150:FF:000010">
    <property type="entry name" value="Protein-L-isoaspartate O-methyltransferase"/>
    <property type="match status" value="1"/>
</dbReference>
<dbReference type="Gene3D" id="3.40.50.150">
    <property type="entry name" value="Vaccinia Virus protein VP39"/>
    <property type="match status" value="1"/>
</dbReference>
<dbReference type="HAMAP" id="MF_00090">
    <property type="entry name" value="PIMT"/>
    <property type="match status" value="1"/>
</dbReference>
<dbReference type="InterPro" id="IPR000682">
    <property type="entry name" value="PCMT"/>
</dbReference>
<dbReference type="InterPro" id="IPR029063">
    <property type="entry name" value="SAM-dependent_MTases_sf"/>
</dbReference>
<dbReference type="NCBIfam" id="TIGR00080">
    <property type="entry name" value="pimt"/>
    <property type="match status" value="1"/>
</dbReference>
<dbReference type="NCBIfam" id="NF001453">
    <property type="entry name" value="PRK00312.1"/>
    <property type="match status" value="1"/>
</dbReference>
<dbReference type="PANTHER" id="PTHR11579">
    <property type="entry name" value="PROTEIN-L-ISOASPARTATE O-METHYLTRANSFERASE"/>
    <property type="match status" value="1"/>
</dbReference>
<dbReference type="PANTHER" id="PTHR11579:SF0">
    <property type="entry name" value="PROTEIN-L-ISOASPARTATE(D-ASPARTATE) O-METHYLTRANSFERASE"/>
    <property type="match status" value="1"/>
</dbReference>
<dbReference type="Pfam" id="PF01135">
    <property type="entry name" value="PCMT"/>
    <property type="match status" value="1"/>
</dbReference>
<dbReference type="SUPFAM" id="SSF53335">
    <property type="entry name" value="S-adenosyl-L-methionine-dependent methyltransferases"/>
    <property type="match status" value="1"/>
</dbReference>
<dbReference type="PROSITE" id="PS01279">
    <property type="entry name" value="PCMT"/>
    <property type="match status" value="1"/>
</dbReference>
<feature type="chain" id="PRO_0000111899" description="Protein-L-isoaspartate O-methyltransferase">
    <location>
        <begin position="1"/>
        <end position="211"/>
    </location>
</feature>
<feature type="active site" evidence="1">
    <location>
        <position position="60"/>
    </location>
</feature>
<accession>Q886L4</accession>
<reference key="1">
    <citation type="journal article" date="2003" name="Proc. Natl. Acad. Sci. U.S.A.">
        <title>The complete genome sequence of the Arabidopsis and tomato pathogen Pseudomonas syringae pv. tomato DC3000.</title>
        <authorList>
            <person name="Buell C.R."/>
            <person name="Joardar V."/>
            <person name="Lindeberg M."/>
            <person name="Selengut J."/>
            <person name="Paulsen I.T."/>
            <person name="Gwinn M.L."/>
            <person name="Dodson R.J."/>
            <person name="DeBoy R.T."/>
            <person name="Durkin A.S."/>
            <person name="Kolonay J.F."/>
            <person name="Madupu R."/>
            <person name="Daugherty S.C."/>
            <person name="Brinkac L.M."/>
            <person name="Beanan M.J."/>
            <person name="Haft D.H."/>
            <person name="Nelson W.C."/>
            <person name="Davidsen T.M."/>
            <person name="Zafar N."/>
            <person name="Zhou L."/>
            <person name="Liu J."/>
            <person name="Yuan Q."/>
            <person name="Khouri H.M."/>
            <person name="Fedorova N.B."/>
            <person name="Tran B."/>
            <person name="Russell D."/>
            <person name="Berry K.J."/>
            <person name="Utterback T.R."/>
            <person name="Van Aken S.E."/>
            <person name="Feldblyum T.V."/>
            <person name="D'Ascenzo M."/>
            <person name="Deng W.-L."/>
            <person name="Ramos A.R."/>
            <person name="Alfano J.R."/>
            <person name="Cartinhour S."/>
            <person name="Chatterjee A.K."/>
            <person name="Delaney T.P."/>
            <person name="Lazarowitz S.G."/>
            <person name="Martin G.B."/>
            <person name="Schneider D.J."/>
            <person name="Tang X."/>
            <person name="Bender C.L."/>
            <person name="White O."/>
            <person name="Fraser C.M."/>
            <person name="Collmer A."/>
        </authorList>
    </citation>
    <scope>NUCLEOTIDE SEQUENCE [LARGE SCALE GENOMIC DNA]</scope>
    <source>
        <strain>ATCC BAA-871 / DC3000</strain>
    </source>
</reference>
<comment type="function">
    <text evidence="1">Catalyzes the methyl esterification of L-isoaspartyl residues in peptides and proteins that result from spontaneous decomposition of normal L-aspartyl and L-asparaginyl residues. It plays a role in the repair and/or degradation of damaged proteins.</text>
</comment>
<comment type="catalytic activity">
    <reaction evidence="1">
        <text>[protein]-L-isoaspartate + S-adenosyl-L-methionine = [protein]-L-isoaspartate alpha-methyl ester + S-adenosyl-L-homocysteine</text>
        <dbReference type="Rhea" id="RHEA:12705"/>
        <dbReference type="Rhea" id="RHEA-COMP:12143"/>
        <dbReference type="Rhea" id="RHEA-COMP:12144"/>
        <dbReference type="ChEBI" id="CHEBI:57856"/>
        <dbReference type="ChEBI" id="CHEBI:59789"/>
        <dbReference type="ChEBI" id="CHEBI:90596"/>
        <dbReference type="ChEBI" id="CHEBI:90598"/>
        <dbReference type="EC" id="2.1.1.77"/>
    </reaction>
</comment>
<comment type="subcellular location">
    <subcellularLocation>
        <location evidence="1">Cytoplasm</location>
    </subcellularLocation>
</comment>
<comment type="similarity">
    <text evidence="1">Belongs to the methyltransferase superfamily. L-isoaspartyl/D-aspartyl protein methyltransferase family.</text>
</comment>
<evidence type="ECO:0000255" key="1">
    <source>
        <dbReference type="HAMAP-Rule" id="MF_00090"/>
    </source>
</evidence>
<organism>
    <name type="scientific">Pseudomonas syringae pv. tomato (strain ATCC BAA-871 / DC3000)</name>
    <dbReference type="NCBI Taxonomy" id="223283"/>
    <lineage>
        <taxon>Bacteria</taxon>
        <taxon>Pseudomonadati</taxon>
        <taxon>Pseudomonadota</taxon>
        <taxon>Gammaproteobacteria</taxon>
        <taxon>Pseudomonadales</taxon>
        <taxon>Pseudomonadaceae</taxon>
        <taxon>Pseudomonas</taxon>
    </lineage>
</organism>